<comment type="function">
    <text evidence="2">Phosphorylates thymidine and thymidine analogs, such as azidothymidine (AZT). Part of the salvage pathway for pyrimidine deoxyribonucleotide synthesis.</text>
</comment>
<comment type="catalytic activity">
    <reaction evidence="2">
        <text>thymidine + ATP = dTMP + ADP + H(+)</text>
        <dbReference type="Rhea" id="RHEA:19129"/>
        <dbReference type="ChEBI" id="CHEBI:15378"/>
        <dbReference type="ChEBI" id="CHEBI:17748"/>
        <dbReference type="ChEBI" id="CHEBI:30616"/>
        <dbReference type="ChEBI" id="CHEBI:63528"/>
        <dbReference type="ChEBI" id="CHEBI:456216"/>
        <dbReference type="EC" id="2.7.1.21"/>
    </reaction>
</comment>
<comment type="subunit">
    <text evidence="1">Homotetramer. Two molecules of substrate bind to each enzyme tetramer.</text>
</comment>
<comment type="similarity">
    <text evidence="3">Belongs to the thymidine kinase family.</text>
</comment>
<name>KITH_RACVI</name>
<dbReference type="EC" id="2.7.1.21"/>
<dbReference type="EMBL" id="U08228">
    <property type="protein sequence ID" value="AAA93128.1"/>
    <property type="molecule type" value="Genomic_DNA"/>
</dbReference>
<dbReference type="RefSeq" id="YP_009143402.1">
    <property type="nucleotide sequence ID" value="NC_027213.1"/>
</dbReference>
<dbReference type="SMR" id="Q90029"/>
<dbReference type="KEGG" id="vg:24528124"/>
<dbReference type="OrthoDB" id="9611at10239"/>
<dbReference type="GO" id="GO:0005524">
    <property type="term" value="F:ATP binding"/>
    <property type="evidence" value="ECO:0007669"/>
    <property type="project" value="UniProtKB-KW"/>
</dbReference>
<dbReference type="GO" id="GO:0046872">
    <property type="term" value="F:metal ion binding"/>
    <property type="evidence" value="ECO:0007669"/>
    <property type="project" value="UniProtKB-KW"/>
</dbReference>
<dbReference type="GO" id="GO:0004797">
    <property type="term" value="F:thymidine kinase activity"/>
    <property type="evidence" value="ECO:0007669"/>
    <property type="project" value="UniProtKB-EC"/>
</dbReference>
<dbReference type="GO" id="GO:0071897">
    <property type="term" value="P:DNA biosynthetic process"/>
    <property type="evidence" value="ECO:0007669"/>
    <property type="project" value="UniProtKB-KW"/>
</dbReference>
<dbReference type="GO" id="GO:0046104">
    <property type="term" value="P:thymidine metabolic process"/>
    <property type="evidence" value="ECO:0007669"/>
    <property type="project" value="TreeGrafter"/>
</dbReference>
<dbReference type="FunFam" id="3.30.60.20:FF:000028">
    <property type="entry name" value="Thymidine kinase"/>
    <property type="match status" value="1"/>
</dbReference>
<dbReference type="FunFam" id="3.40.50.300:FF:000761">
    <property type="entry name" value="Thymidine kinase"/>
    <property type="match status" value="1"/>
</dbReference>
<dbReference type="Gene3D" id="3.30.60.20">
    <property type="match status" value="1"/>
</dbReference>
<dbReference type="Gene3D" id="3.40.50.300">
    <property type="entry name" value="P-loop containing nucleotide triphosphate hydrolases"/>
    <property type="match status" value="1"/>
</dbReference>
<dbReference type="InterPro" id="IPR027417">
    <property type="entry name" value="P-loop_NTPase"/>
</dbReference>
<dbReference type="InterPro" id="IPR001267">
    <property type="entry name" value="Thymidine_kinase"/>
</dbReference>
<dbReference type="InterPro" id="IPR020633">
    <property type="entry name" value="Thymidine_kinase_CS"/>
</dbReference>
<dbReference type="PANTHER" id="PTHR11441">
    <property type="entry name" value="THYMIDINE KINASE"/>
    <property type="match status" value="1"/>
</dbReference>
<dbReference type="PANTHER" id="PTHR11441:SF0">
    <property type="entry name" value="THYMIDINE KINASE, CYTOSOLIC"/>
    <property type="match status" value="1"/>
</dbReference>
<dbReference type="Pfam" id="PF00265">
    <property type="entry name" value="TK"/>
    <property type="match status" value="1"/>
</dbReference>
<dbReference type="PIRSF" id="PIRSF035805">
    <property type="entry name" value="TK_cell"/>
    <property type="match status" value="1"/>
</dbReference>
<dbReference type="SUPFAM" id="SSF57716">
    <property type="entry name" value="Glucocorticoid receptor-like (DNA-binding domain)"/>
    <property type="match status" value="1"/>
</dbReference>
<dbReference type="SUPFAM" id="SSF52540">
    <property type="entry name" value="P-loop containing nucleoside triphosphate hydrolases"/>
    <property type="match status" value="1"/>
</dbReference>
<dbReference type="PROSITE" id="PS00603">
    <property type="entry name" value="TK_CELLULAR_TYPE"/>
    <property type="match status" value="1"/>
</dbReference>
<proteinExistence type="inferred from homology"/>
<keyword id="KW-0067">ATP-binding</keyword>
<keyword id="KW-1015">Disulfide bond</keyword>
<keyword id="KW-0237">DNA synthesis</keyword>
<keyword id="KW-0418">Kinase</keyword>
<keyword id="KW-0479">Metal-binding</keyword>
<keyword id="KW-0547">Nucleotide-binding</keyword>
<keyword id="KW-0808">Transferase</keyword>
<keyword id="KW-0862">Zinc</keyword>
<sequence length="177" mass="20091">MNGGHIQLIIGPMFSGKSTELIRRVRRYQIAQYKCITIKYTNDTRYGTGLWTHDKHNFSAMETTKLLNIIDAVTDFSVIGIDEGQFFPDIVEFCEYMANNGKIVIVAALDGTFQRKPFTTISNLIPLSEMVVKLTAVCMKCFKEASFSKRLGTETEIEIIGGEDMYQSVCRKCYINE</sequence>
<evidence type="ECO:0000250" key="1"/>
<evidence type="ECO:0000250" key="2">
    <source>
        <dbReference type="UniProtKB" id="O57203"/>
    </source>
</evidence>
<evidence type="ECO:0000305" key="3"/>
<gene>
    <name type="primary">OPG101</name>
</gene>
<accession>Q90029</accession>
<organismHost>
    <name type="scientific">Procyon lotor</name>
    <name type="common">Raccoon</name>
    <dbReference type="NCBI Taxonomy" id="9654"/>
</organismHost>
<organism>
    <name type="scientific">Raccoon poxvirus</name>
    <name type="common">RCN</name>
    <dbReference type="NCBI Taxonomy" id="10256"/>
    <lineage>
        <taxon>Viruses</taxon>
        <taxon>Varidnaviria</taxon>
        <taxon>Bamfordvirae</taxon>
        <taxon>Nucleocytoviricota</taxon>
        <taxon>Pokkesviricetes</taxon>
        <taxon>Chitovirales</taxon>
        <taxon>Poxviridae</taxon>
        <taxon>Chordopoxvirinae</taxon>
        <taxon>Orthopoxvirus</taxon>
    </lineage>
</organism>
<feature type="chain" id="PRO_0000174934" description="Thymidine kinase">
    <location>
        <begin position="1"/>
        <end position="177"/>
    </location>
</feature>
<feature type="active site" description="Proton acceptor" evidence="2">
    <location>
        <position position="83"/>
    </location>
</feature>
<feature type="binding site" evidence="2">
    <location>
        <begin position="11"/>
        <end position="18"/>
    </location>
    <ligand>
        <name>ATP</name>
        <dbReference type="ChEBI" id="CHEBI:30616"/>
    </ligand>
</feature>
<feature type="binding site" evidence="2">
    <location>
        <position position="113"/>
    </location>
    <ligand>
        <name>substrate</name>
    </ligand>
</feature>
<feature type="binding site" evidence="2">
    <location>
        <position position="138"/>
    </location>
    <ligand>
        <name>Zn(2+)</name>
        <dbReference type="ChEBI" id="CHEBI:29105"/>
    </ligand>
</feature>
<feature type="binding site" evidence="2">
    <location>
        <position position="141"/>
    </location>
    <ligand>
        <name>Zn(2+)</name>
        <dbReference type="ChEBI" id="CHEBI:29105"/>
    </ligand>
</feature>
<feature type="binding site" evidence="2">
    <location>
        <begin position="157"/>
        <end position="161"/>
    </location>
    <ligand>
        <name>substrate</name>
    </ligand>
</feature>
<feature type="binding site" evidence="2">
    <location>
        <position position="170"/>
    </location>
    <ligand>
        <name>Zn(2+)</name>
        <dbReference type="ChEBI" id="CHEBI:29105"/>
    </ligand>
</feature>
<feature type="binding site" evidence="2">
    <location>
        <position position="173"/>
    </location>
    <ligand>
        <name>Zn(2+)</name>
        <dbReference type="ChEBI" id="CHEBI:29105"/>
    </ligand>
</feature>
<feature type="disulfide bond" description="Interchain (with C-173)" evidence="2">
    <location>
        <position position="170"/>
    </location>
</feature>
<feature type="disulfide bond" description="Interchain (with C-170)" evidence="2">
    <location>
        <position position="173"/>
    </location>
</feature>
<reference key="1">
    <citation type="journal article" date="1995" name="Virus Genes">
        <title>Nucleotide sequence of the thymidine kinase gene of raccoon poxvirus.</title>
        <authorList>
            <person name="Lutze-Wallace C."/>
            <person name="Sidhu M."/>
            <person name="Kappeler A."/>
        </authorList>
    </citation>
    <scope>NUCLEOTIDE SEQUENCE [GENOMIC DNA]</scope>
    <source>
        <strain>Herman</strain>
    </source>
</reference>
<protein>
    <recommendedName>
        <fullName>Thymidine kinase</fullName>
        <ecNumber>2.7.1.21</ecNumber>
    </recommendedName>
</protein>